<organism>
    <name type="scientific">Homo sapiens</name>
    <name type="common">Human</name>
    <dbReference type="NCBI Taxonomy" id="9606"/>
    <lineage>
        <taxon>Eukaryota</taxon>
        <taxon>Metazoa</taxon>
        <taxon>Chordata</taxon>
        <taxon>Craniata</taxon>
        <taxon>Vertebrata</taxon>
        <taxon>Euteleostomi</taxon>
        <taxon>Mammalia</taxon>
        <taxon>Eutheria</taxon>
        <taxon>Euarchontoglires</taxon>
        <taxon>Primates</taxon>
        <taxon>Haplorrhini</taxon>
        <taxon>Catarrhini</taxon>
        <taxon>Hominidae</taxon>
        <taxon>Homo</taxon>
    </lineage>
</organism>
<evidence type="ECO:0000250" key="1">
    <source>
        <dbReference type="UniProtKB" id="Q3UWY1"/>
    </source>
</evidence>
<evidence type="ECO:0000269" key="2">
    <source ref="1"/>
</evidence>
<evidence type="ECO:0000305" key="3"/>
<evidence type="ECO:0000312" key="4">
    <source>
        <dbReference type="HGNC" id="HGNC:28840"/>
    </source>
</evidence>
<protein>
    <recommendedName>
        <fullName evidence="3">PRAME family member 1</fullName>
    </recommendedName>
</protein>
<gene>
    <name evidence="4" type="primary">PRAMEF1</name>
</gene>
<sequence>MSIQAPPRLLELAGQSLLRDQALSISAMEELPRVLYLPLFMEAFSRRHFQTLTVMVQAWPFTCLPLGSLMKTLHLETLKALLEGLHMLLTQKDRPRRWKLQVLDLRDVDENFWARWPGAWALSCFPETTSKRQTAEDCPRMGEHQPLKVFIDICLKEIPQDECLRYLFQWVYQRRGLVHLCCSKLVNYLTPIKYLRKSLKIIYLNSIQELEIRNMSWPRLIRKLRCYLKEMKNLRKLVFSRCHHYTSDNELEGRLVAKFSSVFLRLEHLQLLKIKLITFFSGHLEQLIRCLQNPLENLELTYGYLLEEDMKCLSQYPSLGYLKHLNLSYVLLFRISLEPLGALLEKIAASLKTLILEGCQIHYSQLSAILPGLSRCSQLTTFYFGRNCMSIDALKDLLRHTSGLSKLSLETYPAPEESLNSLVRVNWEIFTPLRAELMCTLREVRQPKRIFIGPTPCPSCGSSPSEELELHLCC</sequence>
<accession>O95521</accession>
<accession>Q9UQP2</accession>
<dbReference type="EMBL" id="AL049686">
    <property type="protein sequence ID" value="CAB41257.1"/>
    <property type="molecule type" value="mRNA"/>
</dbReference>
<dbReference type="EMBL" id="AC244670">
    <property type="status" value="NOT_ANNOTATED_CDS"/>
    <property type="molecule type" value="Genomic_DNA"/>
</dbReference>
<dbReference type="EMBL" id="AL022101">
    <property type="status" value="NOT_ANNOTATED_CDS"/>
    <property type="molecule type" value="Genomic_DNA"/>
</dbReference>
<dbReference type="EMBL" id="AL023753">
    <property type="status" value="NOT_ANNOTATED_CDS"/>
    <property type="molecule type" value="Genomic_DNA"/>
</dbReference>
<dbReference type="CCDS" id="CCDS148.1"/>
<dbReference type="RefSeq" id="NP_075389.2">
    <property type="nucleotide sequence ID" value="NM_023013.4"/>
</dbReference>
<dbReference type="SMR" id="O95521"/>
<dbReference type="FunCoup" id="O95521">
    <property type="interactions" value="18"/>
</dbReference>
<dbReference type="STRING" id="9606.ENSP00000332134"/>
<dbReference type="GlyGen" id="O95521">
    <property type="glycosylation" value="1 site"/>
</dbReference>
<dbReference type="iPTMnet" id="O95521"/>
<dbReference type="PhosphoSitePlus" id="O95521"/>
<dbReference type="BioMuta" id="PRAMEF1"/>
<dbReference type="jPOST" id="O95521"/>
<dbReference type="MassIVE" id="O95521"/>
<dbReference type="PaxDb" id="9606-ENSP00000332134"/>
<dbReference type="PeptideAtlas" id="O95521"/>
<dbReference type="ProteomicsDB" id="50933"/>
<dbReference type="Pumba" id="O95521"/>
<dbReference type="Antibodypedia" id="68093">
    <property type="antibodies" value="86 antibodies from 10 providers"/>
</dbReference>
<dbReference type="DNASU" id="65121"/>
<dbReference type="Ensembl" id="ENST00000332296.7">
    <property type="protein sequence ID" value="ENSP00000332134.7"/>
    <property type="gene ID" value="ENSG00000116721.9"/>
</dbReference>
<dbReference type="GeneID" id="65121"/>
<dbReference type="KEGG" id="hsa:65121"/>
<dbReference type="MANE-Select" id="ENST00000332296.7">
    <property type="protein sequence ID" value="ENSP00000332134.7"/>
    <property type="RefSeq nucleotide sequence ID" value="NM_023013.4"/>
    <property type="RefSeq protein sequence ID" value="NP_075389.2"/>
</dbReference>
<dbReference type="UCSC" id="uc031tpg.1">
    <property type="organism name" value="human"/>
</dbReference>
<dbReference type="AGR" id="HGNC:28840"/>
<dbReference type="CTD" id="65121"/>
<dbReference type="DisGeNET" id="65121"/>
<dbReference type="GeneCards" id="PRAMEF1"/>
<dbReference type="HGNC" id="HGNC:28840">
    <property type="gene designation" value="PRAMEF1"/>
</dbReference>
<dbReference type="HPA" id="ENSG00000116721">
    <property type="expression patterns" value="Not detected"/>
</dbReference>
<dbReference type="neXtProt" id="NX_O95521"/>
<dbReference type="OpenTargets" id="ENSG00000116721"/>
<dbReference type="PharmGKB" id="PA142671138"/>
<dbReference type="VEuPathDB" id="HostDB:ENSG00000116721"/>
<dbReference type="eggNOG" id="ENOG502QWSJ">
    <property type="taxonomic scope" value="Eukaryota"/>
</dbReference>
<dbReference type="GeneTree" id="ENSGT01030000234531"/>
<dbReference type="HOGENOM" id="CLU_039635_2_1_1"/>
<dbReference type="InParanoid" id="O95521"/>
<dbReference type="OMA" id="HMVLTQK"/>
<dbReference type="OrthoDB" id="9623026at2759"/>
<dbReference type="PAN-GO" id="O95521">
    <property type="GO annotations" value="1 GO annotation based on evolutionary models"/>
</dbReference>
<dbReference type="TreeFam" id="TF332708"/>
<dbReference type="PathwayCommons" id="O95521"/>
<dbReference type="BioGRID-ORCS" id="65121">
    <property type="hits" value="23 hits in 1035 CRISPR screens"/>
</dbReference>
<dbReference type="GenomeRNAi" id="65121"/>
<dbReference type="Pharos" id="O95521">
    <property type="development level" value="Tdark"/>
</dbReference>
<dbReference type="PRO" id="PR:O95521"/>
<dbReference type="Proteomes" id="UP000005640">
    <property type="component" value="Chromosome 1"/>
</dbReference>
<dbReference type="RNAct" id="O95521">
    <property type="molecule type" value="protein"/>
</dbReference>
<dbReference type="Bgee" id="ENSG00000116721">
    <property type="expression patterns" value="Expressed in right testis and 2 other cell types or tissues"/>
</dbReference>
<dbReference type="GO" id="GO:0031462">
    <property type="term" value="C:Cul2-RING ubiquitin ligase complex"/>
    <property type="evidence" value="ECO:0000318"/>
    <property type="project" value="GO_Central"/>
</dbReference>
<dbReference type="GO" id="GO:0005737">
    <property type="term" value="C:cytoplasm"/>
    <property type="evidence" value="ECO:0000318"/>
    <property type="project" value="GO_Central"/>
</dbReference>
<dbReference type="GO" id="GO:1990756">
    <property type="term" value="F:ubiquitin-like ligase-substrate adaptor activity"/>
    <property type="evidence" value="ECO:0000318"/>
    <property type="project" value="GO_Central"/>
</dbReference>
<dbReference type="GO" id="GO:0043066">
    <property type="term" value="P:negative regulation of apoptotic process"/>
    <property type="evidence" value="ECO:0007669"/>
    <property type="project" value="InterPro"/>
</dbReference>
<dbReference type="GO" id="GO:0045596">
    <property type="term" value="P:negative regulation of cell differentiation"/>
    <property type="evidence" value="ECO:0007669"/>
    <property type="project" value="InterPro"/>
</dbReference>
<dbReference type="GO" id="GO:0045892">
    <property type="term" value="P:negative regulation of DNA-templated transcription"/>
    <property type="evidence" value="ECO:0007669"/>
    <property type="project" value="InterPro"/>
</dbReference>
<dbReference type="GO" id="GO:0008284">
    <property type="term" value="P:positive regulation of cell population proliferation"/>
    <property type="evidence" value="ECO:0007669"/>
    <property type="project" value="InterPro"/>
</dbReference>
<dbReference type="GO" id="GO:0043161">
    <property type="term" value="P:proteasome-mediated ubiquitin-dependent protein catabolic process"/>
    <property type="evidence" value="ECO:0000318"/>
    <property type="project" value="GO_Central"/>
</dbReference>
<dbReference type="FunFam" id="3.80.10.10:FF:000079">
    <property type="entry name" value="PRAME family member 18"/>
    <property type="match status" value="1"/>
</dbReference>
<dbReference type="Gene3D" id="3.80.10.10">
    <property type="entry name" value="Ribonuclease Inhibitor"/>
    <property type="match status" value="1"/>
</dbReference>
<dbReference type="InterPro" id="IPR032675">
    <property type="entry name" value="LRR_dom_sf"/>
</dbReference>
<dbReference type="InterPro" id="IPR026271">
    <property type="entry name" value="PRAME"/>
</dbReference>
<dbReference type="InterPro" id="IPR050694">
    <property type="entry name" value="PRAME_domain"/>
</dbReference>
<dbReference type="PANTHER" id="PTHR14224:SF81">
    <property type="entry name" value="PRAME FAMILY MEMBER 1-RELATED"/>
    <property type="match status" value="1"/>
</dbReference>
<dbReference type="PANTHER" id="PTHR14224">
    <property type="entry name" value="SIMILAR TO PREFERENTIALLY EXPRESSED ANTIGEN IN MELANOMA-LIKE 3"/>
    <property type="match status" value="1"/>
</dbReference>
<dbReference type="PIRSF" id="PIRSF038286">
    <property type="entry name" value="PRAME"/>
    <property type="match status" value="1"/>
</dbReference>
<dbReference type="SUPFAM" id="SSF52047">
    <property type="entry name" value="RNI-like"/>
    <property type="match status" value="1"/>
</dbReference>
<reference key="1">
    <citation type="submission" date="2004-11" db="EMBL/GenBank/DDBJ databases">
        <authorList>
            <person name="Rhodes S."/>
        </authorList>
    </citation>
    <scope>NUCLEOTIDE SEQUENCE [MRNA]</scope>
    <scope>VARIANTS GLN-252 AND ALA-372</scope>
</reference>
<reference key="2">
    <citation type="journal article" date="2006" name="Nature">
        <title>The DNA sequence and biological annotation of human chromosome 1.</title>
        <authorList>
            <person name="Gregory S.G."/>
            <person name="Barlow K.F."/>
            <person name="McLay K.E."/>
            <person name="Kaul R."/>
            <person name="Swarbreck D."/>
            <person name="Dunham A."/>
            <person name="Scott C.E."/>
            <person name="Howe K.L."/>
            <person name="Woodfine K."/>
            <person name="Spencer C.C.A."/>
            <person name="Jones M.C."/>
            <person name="Gillson C."/>
            <person name="Searle S."/>
            <person name="Zhou Y."/>
            <person name="Kokocinski F."/>
            <person name="McDonald L."/>
            <person name="Evans R."/>
            <person name="Phillips K."/>
            <person name="Atkinson A."/>
            <person name="Cooper R."/>
            <person name="Jones C."/>
            <person name="Hall R.E."/>
            <person name="Andrews T.D."/>
            <person name="Lloyd C."/>
            <person name="Ainscough R."/>
            <person name="Almeida J.P."/>
            <person name="Ambrose K.D."/>
            <person name="Anderson F."/>
            <person name="Andrew R.W."/>
            <person name="Ashwell R.I.S."/>
            <person name="Aubin K."/>
            <person name="Babbage A.K."/>
            <person name="Bagguley C.L."/>
            <person name="Bailey J."/>
            <person name="Beasley H."/>
            <person name="Bethel G."/>
            <person name="Bird C.P."/>
            <person name="Bray-Allen S."/>
            <person name="Brown J.Y."/>
            <person name="Brown A.J."/>
            <person name="Buckley D."/>
            <person name="Burton J."/>
            <person name="Bye J."/>
            <person name="Carder C."/>
            <person name="Chapman J.C."/>
            <person name="Clark S.Y."/>
            <person name="Clarke G."/>
            <person name="Clee C."/>
            <person name="Cobley V."/>
            <person name="Collier R.E."/>
            <person name="Corby N."/>
            <person name="Coville G.J."/>
            <person name="Davies J."/>
            <person name="Deadman R."/>
            <person name="Dunn M."/>
            <person name="Earthrowl M."/>
            <person name="Ellington A.G."/>
            <person name="Errington H."/>
            <person name="Frankish A."/>
            <person name="Frankland J."/>
            <person name="French L."/>
            <person name="Garner P."/>
            <person name="Garnett J."/>
            <person name="Gay L."/>
            <person name="Ghori M.R.J."/>
            <person name="Gibson R."/>
            <person name="Gilby L.M."/>
            <person name="Gillett W."/>
            <person name="Glithero R.J."/>
            <person name="Grafham D.V."/>
            <person name="Griffiths C."/>
            <person name="Griffiths-Jones S."/>
            <person name="Grocock R."/>
            <person name="Hammond S."/>
            <person name="Harrison E.S.I."/>
            <person name="Hart E."/>
            <person name="Haugen E."/>
            <person name="Heath P.D."/>
            <person name="Holmes S."/>
            <person name="Holt K."/>
            <person name="Howden P.J."/>
            <person name="Hunt A.R."/>
            <person name="Hunt S.E."/>
            <person name="Hunter G."/>
            <person name="Isherwood J."/>
            <person name="James R."/>
            <person name="Johnson C."/>
            <person name="Johnson D."/>
            <person name="Joy A."/>
            <person name="Kay M."/>
            <person name="Kershaw J.K."/>
            <person name="Kibukawa M."/>
            <person name="Kimberley A.M."/>
            <person name="King A."/>
            <person name="Knights A.J."/>
            <person name="Lad H."/>
            <person name="Laird G."/>
            <person name="Lawlor S."/>
            <person name="Leongamornlert D.A."/>
            <person name="Lloyd D.M."/>
            <person name="Loveland J."/>
            <person name="Lovell J."/>
            <person name="Lush M.J."/>
            <person name="Lyne R."/>
            <person name="Martin S."/>
            <person name="Mashreghi-Mohammadi M."/>
            <person name="Matthews L."/>
            <person name="Matthews N.S.W."/>
            <person name="McLaren S."/>
            <person name="Milne S."/>
            <person name="Mistry S."/>
            <person name="Moore M.J.F."/>
            <person name="Nickerson T."/>
            <person name="O'Dell C.N."/>
            <person name="Oliver K."/>
            <person name="Palmeiri A."/>
            <person name="Palmer S.A."/>
            <person name="Parker A."/>
            <person name="Patel D."/>
            <person name="Pearce A.V."/>
            <person name="Peck A.I."/>
            <person name="Pelan S."/>
            <person name="Phelps K."/>
            <person name="Phillimore B.J."/>
            <person name="Plumb R."/>
            <person name="Rajan J."/>
            <person name="Raymond C."/>
            <person name="Rouse G."/>
            <person name="Saenphimmachak C."/>
            <person name="Sehra H.K."/>
            <person name="Sheridan E."/>
            <person name="Shownkeen R."/>
            <person name="Sims S."/>
            <person name="Skuce C.D."/>
            <person name="Smith M."/>
            <person name="Steward C."/>
            <person name="Subramanian S."/>
            <person name="Sycamore N."/>
            <person name="Tracey A."/>
            <person name="Tromans A."/>
            <person name="Van Helmond Z."/>
            <person name="Wall M."/>
            <person name="Wallis J.M."/>
            <person name="White S."/>
            <person name="Whitehead S.L."/>
            <person name="Wilkinson J.E."/>
            <person name="Willey D.L."/>
            <person name="Williams H."/>
            <person name="Wilming L."/>
            <person name="Wray P.W."/>
            <person name="Wu Z."/>
            <person name="Coulson A."/>
            <person name="Vaudin M."/>
            <person name="Sulston J.E."/>
            <person name="Durbin R.M."/>
            <person name="Hubbard T."/>
            <person name="Wooster R."/>
            <person name="Dunham I."/>
            <person name="Carter N.P."/>
            <person name="McVean G."/>
            <person name="Ross M.T."/>
            <person name="Harrow J."/>
            <person name="Olson M.V."/>
            <person name="Beck S."/>
            <person name="Rogers J."/>
            <person name="Bentley D.R."/>
        </authorList>
    </citation>
    <scope>NUCLEOTIDE SEQUENCE [LARGE SCALE GENOMIC DNA]</scope>
</reference>
<comment type="similarity">
    <text evidence="3">Belongs to the PRAME family.</text>
</comment>
<keyword id="KW-0433">Leucine-rich repeat</keyword>
<keyword id="KW-1185">Reference proteome</keyword>
<keyword id="KW-0677">Repeat</keyword>
<feature type="chain" id="PRO_0000156975" description="PRAME family member 1">
    <location>
        <begin position="1"/>
        <end position="474"/>
    </location>
</feature>
<feature type="repeat" description="LRR 1; degenerate" evidence="1">
    <location>
        <begin position="97"/>
        <end position="124"/>
    </location>
</feature>
<feature type="repeat" description="LRR 2; degenerate" evidence="1">
    <location>
        <begin position="179"/>
        <end position="203"/>
    </location>
</feature>
<feature type="repeat" description="LRR 3; degenerate" evidence="1">
    <location>
        <begin position="204"/>
        <end position="230"/>
    </location>
</feature>
<feature type="repeat" description="LRR 4; degenerate" evidence="1">
    <location>
        <begin position="231"/>
        <end position="265"/>
    </location>
</feature>
<feature type="repeat" description="LRR 5" evidence="1">
    <location>
        <begin position="266"/>
        <end position="291"/>
    </location>
</feature>
<feature type="repeat" description="LRR 6" evidence="1">
    <location>
        <begin position="292"/>
        <end position="323"/>
    </location>
</feature>
<feature type="repeat" description="LRR 7" evidence="1">
    <location>
        <begin position="324"/>
        <end position="342"/>
    </location>
</feature>
<feature type="repeat" description="LRR 8" evidence="1">
    <location>
        <begin position="348"/>
        <end position="375"/>
    </location>
</feature>
<feature type="repeat" description="LRR 9" evidence="1">
    <location>
        <begin position="376"/>
        <end position="400"/>
    </location>
</feature>
<feature type="sequence variant" id="VAR_053604" description="In dbSNP:rs1063767.">
    <original>L</original>
    <variation>M</variation>
    <location>
        <position position="204"/>
    </location>
</feature>
<feature type="sequence variant" id="VAR_062138" description="In dbSNP:rs1063769.">
    <original>R</original>
    <variation>H</variation>
    <location>
        <position position="213"/>
    </location>
</feature>
<feature type="sequence variant" id="VAR_060091" description="In dbSNP:rs1769774.">
    <original>P</original>
    <variation>S</variation>
    <location>
        <position position="218"/>
    </location>
</feature>
<feature type="sequence variant" id="VAR_034396" description="In dbSNP:rs1063776." evidence="2">
    <original>E</original>
    <variation>Q</variation>
    <location>
        <position position="252"/>
    </location>
</feature>
<feature type="sequence variant" id="VAR_034397" description="In dbSNP:rs5003730.">
    <original>Y</original>
    <variation>C</variation>
    <location>
        <position position="302"/>
    </location>
</feature>
<feature type="sequence variant" id="VAR_060092" description="In dbSNP:rs1063795." evidence="2">
    <original>G</original>
    <variation>A</variation>
    <location>
        <position position="372"/>
    </location>
</feature>
<feature type="sequence variant" id="VAR_053605" description="In dbSNP:rs1052908.">
    <original>R</original>
    <variation>S</variation>
    <location>
        <position position="386"/>
    </location>
</feature>
<name>PRAM1_HUMAN</name>
<proteinExistence type="evidence at transcript level"/>